<protein>
    <recommendedName>
        <fullName evidence="1">Polyribonucleotide nucleotidyltransferase</fullName>
        <ecNumber evidence="1">2.7.7.8</ecNumber>
    </recommendedName>
    <alternativeName>
        <fullName evidence="1">Polynucleotide phosphorylase</fullName>
        <shortName evidence="1">PNPase</shortName>
    </alternativeName>
</protein>
<name>PNP_BIFAA</name>
<gene>
    <name evidence="1" type="primary">pnp</name>
    <name type="ordered locus">BAD_0260</name>
</gene>
<comment type="function">
    <text evidence="1">Involved in mRNA degradation. Catalyzes the phosphorolysis of single-stranded polyribonucleotides processively in the 3'- to 5'-direction.</text>
</comment>
<comment type="catalytic activity">
    <reaction evidence="1">
        <text>RNA(n+1) + phosphate = RNA(n) + a ribonucleoside 5'-diphosphate</text>
        <dbReference type="Rhea" id="RHEA:22096"/>
        <dbReference type="Rhea" id="RHEA-COMP:14527"/>
        <dbReference type="Rhea" id="RHEA-COMP:17342"/>
        <dbReference type="ChEBI" id="CHEBI:43474"/>
        <dbReference type="ChEBI" id="CHEBI:57930"/>
        <dbReference type="ChEBI" id="CHEBI:140395"/>
        <dbReference type="EC" id="2.7.7.8"/>
    </reaction>
</comment>
<comment type="cofactor">
    <cofactor evidence="1">
        <name>Mg(2+)</name>
        <dbReference type="ChEBI" id="CHEBI:18420"/>
    </cofactor>
</comment>
<comment type="subcellular location">
    <subcellularLocation>
        <location evidence="1">Cytoplasm</location>
    </subcellularLocation>
</comment>
<comment type="similarity">
    <text evidence="1">Belongs to the polyribonucleotide nucleotidyltransferase family.</text>
</comment>
<sequence length="892" mass="99740">MEGPEIKAVEAVIDNGSFGKRTLRFETGRLAQQADGAVAAYLDDDSMILSTTTAGSSPKENYDFFPLTVDVEEKMYAAGKIPGSFFRREGRPSSEAILACRIIDRPLRPLFPHTLRNEVQVVETVLAVNPDDAYDVVALNAASASTMISGLPFEGPVSGVRLALIDGQWVAFPRWSERERAVFEIVVAGRVVENGDVAIAMIEAGAGKNAWHLIYDEGQTKPDEEVVAGGLEAAKPFIKVICEAQAELKKIAAKETKEFQLFPEYTEDLYNRIDEIAHADLDEALSIAEKLPRQDRIHEIKEGVKATLAGEFTDMEDAEKDKEIGNAFKELQRQIVRRRILTQDYRIDGRGLRDIRTLSAEVDIVPRVHGSALFQRGETQILGVTTLNMLKMEQQIDALSGPQSKRYMHNYEMPPYSTGETGRVGSPKRREIGHGALAEKALVPVLPSREEFPYAIRQVSEAIGSNGSTSMGSVCASTLSLLAAGVPLKAPVAGIAMGLVSGDVDGQHIYKTLTDILGAEDAFGDMDFKVAGTSEFITALQLDTKLDGIPADILASALQQAKEARTTILEVINECIDGPAEMSPYAPRIITTTVPVDKIGEVIGPKGKMINQIQEDTGAEIAIEDDGTVYISSEGGEAAEKAKEIIDQIANPHVPEAGETYNGKVVKTTSFGAFVNLTPGTDGLLHISQIRNLANGERIDAVEDVLKEGDTVEVVVQGVDDRGKISLAIPGFEDQESSAPRRDRGDRDDRRGGRGRRDDRRRSDDRDDRDYDDRPRRRRSDRDDDRDYDDRPRRRRSDRDDRDYDRDDRRSSRSDRDDRDYDDRPRRRRSDRDDRDYDRDDRRSDRRRGSRRDDRNPRYAADENYDEYRADREERSERPRRRVRRDFDPFED</sequence>
<reference key="1">
    <citation type="submission" date="2006-12" db="EMBL/GenBank/DDBJ databases">
        <title>Bifidobacterium adolescentis complete genome sequence.</title>
        <authorList>
            <person name="Suzuki T."/>
            <person name="Tsuda Y."/>
            <person name="Kanou N."/>
            <person name="Inoue T."/>
            <person name="Kumazaki K."/>
            <person name="Nagano S."/>
            <person name="Hirai S."/>
            <person name="Tanaka K."/>
            <person name="Watanabe K."/>
        </authorList>
    </citation>
    <scope>NUCLEOTIDE SEQUENCE [LARGE SCALE GENOMIC DNA]</scope>
    <source>
        <strain>ATCC 15703 / DSM 20083 / NCTC 11814 / E194a</strain>
    </source>
</reference>
<feature type="chain" id="PRO_0000329531" description="Polyribonucleotide nucleotidyltransferase">
    <location>
        <begin position="1"/>
        <end position="892"/>
    </location>
</feature>
<feature type="domain" description="KH" evidence="1">
    <location>
        <begin position="587"/>
        <end position="646"/>
    </location>
</feature>
<feature type="domain" description="S1 motif" evidence="1">
    <location>
        <begin position="658"/>
        <end position="730"/>
    </location>
</feature>
<feature type="region of interest" description="Disordered" evidence="2">
    <location>
        <begin position="407"/>
        <end position="427"/>
    </location>
</feature>
<feature type="region of interest" description="Disordered" evidence="2">
    <location>
        <begin position="727"/>
        <end position="892"/>
    </location>
</feature>
<feature type="compositionally biased region" description="Basic and acidic residues" evidence="2">
    <location>
        <begin position="739"/>
        <end position="844"/>
    </location>
</feature>
<feature type="compositionally biased region" description="Basic and acidic residues" evidence="2">
    <location>
        <begin position="851"/>
        <end position="877"/>
    </location>
</feature>
<feature type="binding site" evidence="1">
    <location>
        <position position="521"/>
    </location>
    <ligand>
        <name>Mg(2+)</name>
        <dbReference type="ChEBI" id="CHEBI:18420"/>
    </ligand>
</feature>
<feature type="binding site" evidence="1">
    <location>
        <position position="527"/>
    </location>
    <ligand>
        <name>Mg(2+)</name>
        <dbReference type="ChEBI" id="CHEBI:18420"/>
    </ligand>
</feature>
<evidence type="ECO:0000255" key="1">
    <source>
        <dbReference type="HAMAP-Rule" id="MF_01595"/>
    </source>
</evidence>
<evidence type="ECO:0000256" key="2">
    <source>
        <dbReference type="SAM" id="MobiDB-lite"/>
    </source>
</evidence>
<proteinExistence type="inferred from homology"/>
<dbReference type="EC" id="2.7.7.8" evidence="1"/>
<dbReference type="EMBL" id="AP009256">
    <property type="protein sequence ID" value="BAF39041.1"/>
    <property type="molecule type" value="Genomic_DNA"/>
</dbReference>
<dbReference type="RefSeq" id="WP_003807809.1">
    <property type="nucleotide sequence ID" value="NZ_CAXVNC010000001.1"/>
</dbReference>
<dbReference type="SMR" id="A1A008"/>
<dbReference type="STRING" id="367928.BAD_0260"/>
<dbReference type="PaxDb" id="1680-BADO_0268"/>
<dbReference type="GeneID" id="4556537"/>
<dbReference type="KEGG" id="bad:BAD_0260"/>
<dbReference type="HOGENOM" id="CLU_004217_2_2_11"/>
<dbReference type="Proteomes" id="UP000008702">
    <property type="component" value="Chromosome"/>
</dbReference>
<dbReference type="GO" id="GO:0005829">
    <property type="term" value="C:cytosol"/>
    <property type="evidence" value="ECO:0007669"/>
    <property type="project" value="TreeGrafter"/>
</dbReference>
<dbReference type="GO" id="GO:0000175">
    <property type="term" value="F:3'-5'-RNA exonuclease activity"/>
    <property type="evidence" value="ECO:0007669"/>
    <property type="project" value="TreeGrafter"/>
</dbReference>
<dbReference type="GO" id="GO:0000287">
    <property type="term" value="F:magnesium ion binding"/>
    <property type="evidence" value="ECO:0007669"/>
    <property type="project" value="UniProtKB-UniRule"/>
</dbReference>
<dbReference type="GO" id="GO:0004654">
    <property type="term" value="F:polyribonucleotide nucleotidyltransferase activity"/>
    <property type="evidence" value="ECO:0007669"/>
    <property type="project" value="UniProtKB-UniRule"/>
</dbReference>
<dbReference type="GO" id="GO:0003723">
    <property type="term" value="F:RNA binding"/>
    <property type="evidence" value="ECO:0007669"/>
    <property type="project" value="UniProtKB-UniRule"/>
</dbReference>
<dbReference type="GO" id="GO:0006402">
    <property type="term" value="P:mRNA catabolic process"/>
    <property type="evidence" value="ECO:0007669"/>
    <property type="project" value="UniProtKB-UniRule"/>
</dbReference>
<dbReference type="GO" id="GO:0006396">
    <property type="term" value="P:RNA processing"/>
    <property type="evidence" value="ECO:0007669"/>
    <property type="project" value="InterPro"/>
</dbReference>
<dbReference type="CDD" id="cd02393">
    <property type="entry name" value="KH-I_PNPase"/>
    <property type="match status" value="1"/>
</dbReference>
<dbReference type="CDD" id="cd11364">
    <property type="entry name" value="RNase_PH_PNPase_2"/>
    <property type="match status" value="1"/>
</dbReference>
<dbReference type="CDD" id="cd04472">
    <property type="entry name" value="S1_PNPase"/>
    <property type="match status" value="1"/>
</dbReference>
<dbReference type="FunFam" id="3.30.1370.10:FF:000001">
    <property type="entry name" value="Polyribonucleotide nucleotidyltransferase"/>
    <property type="match status" value="1"/>
</dbReference>
<dbReference type="FunFam" id="3.30.230.70:FF:000001">
    <property type="entry name" value="Polyribonucleotide nucleotidyltransferase"/>
    <property type="match status" value="1"/>
</dbReference>
<dbReference type="FunFam" id="3.30.230.70:FF:000002">
    <property type="entry name" value="Polyribonucleotide nucleotidyltransferase"/>
    <property type="match status" value="1"/>
</dbReference>
<dbReference type="Gene3D" id="3.30.230.70">
    <property type="entry name" value="GHMP Kinase, N-terminal domain"/>
    <property type="match status" value="2"/>
</dbReference>
<dbReference type="Gene3D" id="3.30.1370.10">
    <property type="entry name" value="K Homology domain, type 1"/>
    <property type="match status" value="1"/>
</dbReference>
<dbReference type="Gene3D" id="2.40.50.140">
    <property type="entry name" value="Nucleic acid-binding proteins"/>
    <property type="match status" value="1"/>
</dbReference>
<dbReference type="HAMAP" id="MF_01595">
    <property type="entry name" value="PNPase"/>
    <property type="match status" value="1"/>
</dbReference>
<dbReference type="InterPro" id="IPR001247">
    <property type="entry name" value="ExoRNase_PH_dom1"/>
</dbReference>
<dbReference type="InterPro" id="IPR036345">
    <property type="entry name" value="ExoRNase_PH_dom2_sf"/>
</dbReference>
<dbReference type="InterPro" id="IPR014069">
    <property type="entry name" value="GPSI/PNP"/>
</dbReference>
<dbReference type="InterPro" id="IPR004087">
    <property type="entry name" value="KH_dom"/>
</dbReference>
<dbReference type="InterPro" id="IPR004088">
    <property type="entry name" value="KH_dom_type_1"/>
</dbReference>
<dbReference type="InterPro" id="IPR036612">
    <property type="entry name" value="KH_dom_type_1_sf"/>
</dbReference>
<dbReference type="InterPro" id="IPR012340">
    <property type="entry name" value="NA-bd_OB-fold"/>
</dbReference>
<dbReference type="InterPro" id="IPR012162">
    <property type="entry name" value="PNPase"/>
</dbReference>
<dbReference type="InterPro" id="IPR027408">
    <property type="entry name" value="PNPase/RNase_PH_dom_sf"/>
</dbReference>
<dbReference type="InterPro" id="IPR015848">
    <property type="entry name" value="PNPase_PH_RNA-bd_bac/org-type"/>
</dbReference>
<dbReference type="InterPro" id="IPR036456">
    <property type="entry name" value="PNPase_PH_RNA-bd_sf"/>
</dbReference>
<dbReference type="InterPro" id="IPR020568">
    <property type="entry name" value="Ribosomal_Su5_D2-typ_SF"/>
</dbReference>
<dbReference type="InterPro" id="IPR003029">
    <property type="entry name" value="S1_domain"/>
</dbReference>
<dbReference type="NCBIfam" id="TIGR03591">
    <property type="entry name" value="polynuc_phos"/>
    <property type="match status" value="1"/>
</dbReference>
<dbReference type="NCBIfam" id="TIGR02696">
    <property type="entry name" value="pppGpp_PNP"/>
    <property type="match status" value="1"/>
</dbReference>
<dbReference type="NCBIfam" id="NF008805">
    <property type="entry name" value="PRK11824.1"/>
    <property type="match status" value="1"/>
</dbReference>
<dbReference type="PANTHER" id="PTHR11252">
    <property type="entry name" value="POLYRIBONUCLEOTIDE NUCLEOTIDYLTRANSFERASE"/>
    <property type="match status" value="1"/>
</dbReference>
<dbReference type="PANTHER" id="PTHR11252:SF0">
    <property type="entry name" value="POLYRIBONUCLEOTIDE NUCLEOTIDYLTRANSFERASE 1, MITOCHONDRIAL"/>
    <property type="match status" value="1"/>
</dbReference>
<dbReference type="Pfam" id="PF00013">
    <property type="entry name" value="KH_1"/>
    <property type="match status" value="1"/>
</dbReference>
<dbReference type="Pfam" id="PF03726">
    <property type="entry name" value="PNPase"/>
    <property type="match status" value="1"/>
</dbReference>
<dbReference type="Pfam" id="PF01138">
    <property type="entry name" value="RNase_PH"/>
    <property type="match status" value="2"/>
</dbReference>
<dbReference type="Pfam" id="PF00575">
    <property type="entry name" value="S1"/>
    <property type="match status" value="1"/>
</dbReference>
<dbReference type="SMART" id="SM00322">
    <property type="entry name" value="KH"/>
    <property type="match status" value="1"/>
</dbReference>
<dbReference type="SMART" id="SM00316">
    <property type="entry name" value="S1"/>
    <property type="match status" value="1"/>
</dbReference>
<dbReference type="SUPFAM" id="SSF54791">
    <property type="entry name" value="Eukaryotic type KH-domain (KH-domain type I)"/>
    <property type="match status" value="1"/>
</dbReference>
<dbReference type="SUPFAM" id="SSF50249">
    <property type="entry name" value="Nucleic acid-binding proteins"/>
    <property type="match status" value="1"/>
</dbReference>
<dbReference type="SUPFAM" id="SSF46915">
    <property type="entry name" value="Polynucleotide phosphorylase/guanosine pentaphosphate synthase (PNPase/GPSI), domain 3"/>
    <property type="match status" value="1"/>
</dbReference>
<dbReference type="SUPFAM" id="SSF55666">
    <property type="entry name" value="Ribonuclease PH domain 2-like"/>
    <property type="match status" value="2"/>
</dbReference>
<dbReference type="SUPFAM" id="SSF54211">
    <property type="entry name" value="Ribosomal protein S5 domain 2-like"/>
    <property type="match status" value="2"/>
</dbReference>
<dbReference type="PROSITE" id="PS50084">
    <property type="entry name" value="KH_TYPE_1"/>
    <property type="match status" value="1"/>
</dbReference>
<dbReference type="PROSITE" id="PS50126">
    <property type="entry name" value="S1"/>
    <property type="match status" value="1"/>
</dbReference>
<organism>
    <name type="scientific">Bifidobacterium adolescentis (strain ATCC 15703 / DSM 20083 / NCTC 11814 / E194a)</name>
    <dbReference type="NCBI Taxonomy" id="367928"/>
    <lineage>
        <taxon>Bacteria</taxon>
        <taxon>Bacillati</taxon>
        <taxon>Actinomycetota</taxon>
        <taxon>Actinomycetes</taxon>
        <taxon>Bifidobacteriales</taxon>
        <taxon>Bifidobacteriaceae</taxon>
        <taxon>Bifidobacterium</taxon>
    </lineage>
</organism>
<accession>A1A008</accession>
<keyword id="KW-0963">Cytoplasm</keyword>
<keyword id="KW-0460">Magnesium</keyword>
<keyword id="KW-0479">Metal-binding</keyword>
<keyword id="KW-0548">Nucleotidyltransferase</keyword>
<keyword id="KW-1185">Reference proteome</keyword>
<keyword id="KW-0694">RNA-binding</keyword>
<keyword id="KW-0808">Transferase</keyword>